<sequence length="288" mass="32086">MSIEFKNVDYIYAPGTPFQTQGLTNISFKIRSGSFVAIAGHTGSGKSTLMQHFDGLLLPSKGSVTIADKSITSNTSSKSLKEIRKKVGLVFQFPESQLFEETVLKDVMFGPLNFGFSEQKAKEQAIQWIRKVGLSEQVMNKSPFELSGGQMRRVAIAGVMAYEPDILCLDEPAAGLDPEGQKQMFDIFKNYQREGHTVILISHNMDDISQYADDMLVLEHGHLIKHASPKEVFSDPDWLKKHFLDEPATSKFARKLEKGGFQFSEMPLTVDSLVNEITTKLKSKGGNE</sequence>
<dbReference type="EC" id="7.-.-.-" evidence="1"/>
<dbReference type="EMBL" id="CP000413">
    <property type="protein sequence ID" value="ABJ59725.1"/>
    <property type="molecule type" value="Genomic_DNA"/>
</dbReference>
<dbReference type="RefSeq" id="WP_003647809.1">
    <property type="nucleotide sequence ID" value="NZ_WBMG01000001.1"/>
</dbReference>
<dbReference type="SMR" id="Q045Z7"/>
<dbReference type="GeneID" id="29639598"/>
<dbReference type="KEGG" id="lga:LGAS_0319"/>
<dbReference type="HOGENOM" id="CLU_000604_1_22_9"/>
<dbReference type="BioCyc" id="LGAS324831:G1G6Y-318-MONOMER"/>
<dbReference type="Proteomes" id="UP000000664">
    <property type="component" value="Chromosome"/>
</dbReference>
<dbReference type="GO" id="GO:0043190">
    <property type="term" value="C:ATP-binding cassette (ABC) transporter complex"/>
    <property type="evidence" value="ECO:0007669"/>
    <property type="project" value="TreeGrafter"/>
</dbReference>
<dbReference type="GO" id="GO:0005524">
    <property type="term" value="F:ATP binding"/>
    <property type="evidence" value="ECO:0007669"/>
    <property type="project" value="UniProtKB-KW"/>
</dbReference>
<dbReference type="GO" id="GO:0016887">
    <property type="term" value="F:ATP hydrolysis activity"/>
    <property type="evidence" value="ECO:0007669"/>
    <property type="project" value="InterPro"/>
</dbReference>
<dbReference type="GO" id="GO:0042626">
    <property type="term" value="F:ATPase-coupled transmembrane transporter activity"/>
    <property type="evidence" value="ECO:0007669"/>
    <property type="project" value="TreeGrafter"/>
</dbReference>
<dbReference type="CDD" id="cd03225">
    <property type="entry name" value="ABC_cobalt_CbiO_domain1"/>
    <property type="match status" value="1"/>
</dbReference>
<dbReference type="FunFam" id="3.40.50.300:FF:000224">
    <property type="entry name" value="Energy-coupling factor transporter ATP-binding protein EcfA"/>
    <property type="match status" value="1"/>
</dbReference>
<dbReference type="Gene3D" id="3.40.50.300">
    <property type="entry name" value="P-loop containing nucleotide triphosphate hydrolases"/>
    <property type="match status" value="1"/>
</dbReference>
<dbReference type="InterPro" id="IPR003593">
    <property type="entry name" value="AAA+_ATPase"/>
</dbReference>
<dbReference type="InterPro" id="IPR003439">
    <property type="entry name" value="ABC_transporter-like_ATP-bd"/>
</dbReference>
<dbReference type="InterPro" id="IPR017871">
    <property type="entry name" value="ABC_transporter-like_CS"/>
</dbReference>
<dbReference type="InterPro" id="IPR015856">
    <property type="entry name" value="ABC_transpr_CbiO/EcfA_su"/>
</dbReference>
<dbReference type="InterPro" id="IPR050095">
    <property type="entry name" value="ECF_ABC_transporter_ATP-bd"/>
</dbReference>
<dbReference type="InterPro" id="IPR030946">
    <property type="entry name" value="EcfA2"/>
</dbReference>
<dbReference type="InterPro" id="IPR027417">
    <property type="entry name" value="P-loop_NTPase"/>
</dbReference>
<dbReference type="NCBIfam" id="TIGR04521">
    <property type="entry name" value="ECF_ATPase_2"/>
    <property type="match status" value="1"/>
</dbReference>
<dbReference type="PANTHER" id="PTHR43553:SF27">
    <property type="entry name" value="ENERGY-COUPLING FACTOR TRANSPORTER ATP-BINDING PROTEIN ECFA2"/>
    <property type="match status" value="1"/>
</dbReference>
<dbReference type="PANTHER" id="PTHR43553">
    <property type="entry name" value="HEAVY METAL TRANSPORTER"/>
    <property type="match status" value="1"/>
</dbReference>
<dbReference type="Pfam" id="PF00005">
    <property type="entry name" value="ABC_tran"/>
    <property type="match status" value="1"/>
</dbReference>
<dbReference type="SMART" id="SM00382">
    <property type="entry name" value="AAA"/>
    <property type="match status" value="1"/>
</dbReference>
<dbReference type="SUPFAM" id="SSF52540">
    <property type="entry name" value="P-loop containing nucleoside triphosphate hydrolases"/>
    <property type="match status" value="1"/>
</dbReference>
<dbReference type="PROSITE" id="PS00211">
    <property type="entry name" value="ABC_TRANSPORTER_1"/>
    <property type="match status" value="1"/>
</dbReference>
<dbReference type="PROSITE" id="PS50893">
    <property type="entry name" value="ABC_TRANSPORTER_2"/>
    <property type="match status" value="1"/>
</dbReference>
<dbReference type="PROSITE" id="PS51246">
    <property type="entry name" value="CBIO"/>
    <property type="match status" value="1"/>
</dbReference>
<accession>Q045Z7</accession>
<evidence type="ECO:0000255" key="1">
    <source>
        <dbReference type="HAMAP-Rule" id="MF_01710"/>
    </source>
</evidence>
<name>ECFA2_LACGA</name>
<protein>
    <recommendedName>
        <fullName evidence="1">Energy-coupling factor transporter ATP-binding protein EcfA2</fullName>
        <shortName evidence="1">ECF transporter A component EcfA2</shortName>
        <ecNumber evidence="1">7.-.-.-</ecNumber>
    </recommendedName>
</protein>
<organism>
    <name type="scientific">Lactobacillus gasseri (strain ATCC 33323 / DSM 20243 / BCRC 14619 / CIP 102991 / JCM 1131 / KCTC 3163 / NCIMB 11718 / NCTC 13722 / AM63)</name>
    <dbReference type="NCBI Taxonomy" id="324831"/>
    <lineage>
        <taxon>Bacteria</taxon>
        <taxon>Bacillati</taxon>
        <taxon>Bacillota</taxon>
        <taxon>Bacilli</taxon>
        <taxon>Lactobacillales</taxon>
        <taxon>Lactobacillaceae</taxon>
        <taxon>Lactobacillus</taxon>
    </lineage>
</organism>
<keyword id="KW-0067">ATP-binding</keyword>
<keyword id="KW-1003">Cell membrane</keyword>
<keyword id="KW-0472">Membrane</keyword>
<keyword id="KW-0547">Nucleotide-binding</keyword>
<keyword id="KW-1278">Translocase</keyword>
<keyword id="KW-0813">Transport</keyword>
<feature type="chain" id="PRO_0000287952" description="Energy-coupling factor transporter ATP-binding protein EcfA2">
    <location>
        <begin position="1"/>
        <end position="288"/>
    </location>
</feature>
<feature type="domain" description="ABC transporter" evidence="1">
    <location>
        <begin position="3"/>
        <end position="245"/>
    </location>
</feature>
<feature type="binding site" evidence="1">
    <location>
        <begin position="40"/>
        <end position="47"/>
    </location>
    <ligand>
        <name>ATP</name>
        <dbReference type="ChEBI" id="CHEBI:30616"/>
    </ligand>
</feature>
<reference key="1">
    <citation type="journal article" date="2006" name="Proc. Natl. Acad. Sci. U.S.A.">
        <title>Comparative genomics of the lactic acid bacteria.</title>
        <authorList>
            <person name="Makarova K.S."/>
            <person name="Slesarev A."/>
            <person name="Wolf Y.I."/>
            <person name="Sorokin A."/>
            <person name="Mirkin B."/>
            <person name="Koonin E.V."/>
            <person name="Pavlov A."/>
            <person name="Pavlova N."/>
            <person name="Karamychev V."/>
            <person name="Polouchine N."/>
            <person name="Shakhova V."/>
            <person name="Grigoriev I."/>
            <person name="Lou Y."/>
            <person name="Rohksar D."/>
            <person name="Lucas S."/>
            <person name="Huang K."/>
            <person name="Goodstein D.M."/>
            <person name="Hawkins T."/>
            <person name="Plengvidhya V."/>
            <person name="Welker D."/>
            <person name="Hughes J."/>
            <person name="Goh Y."/>
            <person name="Benson A."/>
            <person name="Baldwin K."/>
            <person name="Lee J.-H."/>
            <person name="Diaz-Muniz I."/>
            <person name="Dosti B."/>
            <person name="Smeianov V."/>
            <person name="Wechter W."/>
            <person name="Barabote R."/>
            <person name="Lorca G."/>
            <person name="Altermann E."/>
            <person name="Barrangou R."/>
            <person name="Ganesan B."/>
            <person name="Xie Y."/>
            <person name="Rawsthorne H."/>
            <person name="Tamir D."/>
            <person name="Parker C."/>
            <person name="Breidt F."/>
            <person name="Broadbent J.R."/>
            <person name="Hutkins R."/>
            <person name="O'Sullivan D."/>
            <person name="Steele J."/>
            <person name="Unlu G."/>
            <person name="Saier M.H. Jr."/>
            <person name="Klaenhammer T."/>
            <person name="Richardson P."/>
            <person name="Kozyavkin S."/>
            <person name="Weimer B.C."/>
            <person name="Mills D.A."/>
        </authorList>
    </citation>
    <scope>NUCLEOTIDE SEQUENCE [LARGE SCALE GENOMIC DNA]</scope>
    <source>
        <strain>ATCC 33323 / DSM 20243 / BCRC 14619 / CIP 102991 / JCM 1131 / KCTC 3163 / NCIMB 11718 / NCTC 13722 / AM63</strain>
    </source>
</reference>
<gene>
    <name evidence="1" type="primary">ecfA2</name>
    <name type="synonym">cbiO2</name>
    <name type="ordered locus">LGAS_0319</name>
</gene>
<proteinExistence type="inferred from homology"/>
<comment type="function">
    <text evidence="1">ATP-binding (A) component of a common energy-coupling factor (ECF) ABC-transporter complex. Unlike classic ABC transporters this ECF transporter provides the energy necessary to transport a number of different substrates.</text>
</comment>
<comment type="subunit">
    <text evidence="1">Forms a stable energy-coupling factor (ECF) transporter complex composed of 2 membrane-embedded substrate-binding proteins (S component), 2 ATP-binding proteins (A component) and 2 transmembrane proteins (T component).</text>
</comment>
<comment type="subcellular location">
    <subcellularLocation>
        <location evidence="1">Cell membrane</location>
        <topology evidence="1">Peripheral membrane protein</topology>
    </subcellularLocation>
</comment>
<comment type="similarity">
    <text evidence="1">Belongs to the ABC transporter superfamily. Energy-coupling factor EcfA family.</text>
</comment>